<protein>
    <recommendedName>
        <fullName evidence="2">Formamidopyrimidine-DNA glycosylase</fullName>
        <shortName evidence="2">Fapy-DNA glycosylase</shortName>
        <ecNumber evidence="2">3.2.2.23</ecNumber>
    </recommendedName>
    <alternativeName>
        <fullName evidence="2">DNA-(apurinic or apyrimidinic site) lyase MutM</fullName>
        <shortName evidence="2">AP lyase MutM</shortName>
        <ecNumber evidence="2">4.2.99.18</ecNumber>
    </alternativeName>
</protein>
<keyword id="KW-0227">DNA damage</keyword>
<keyword id="KW-0234">DNA repair</keyword>
<keyword id="KW-0238">DNA-binding</keyword>
<keyword id="KW-0326">Glycosidase</keyword>
<keyword id="KW-0378">Hydrolase</keyword>
<keyword id="KW-0456">Lyase</keyword>
<keyword id="KW-0479">Metal-binding</keyword>
<keyword id="KW-0511">Multifunctional enzyme</keyword>
<keyword id="KW-0862">Zinc</keyword>
<keyword id="KW-0863">Zinc-finger</keyword>
<dbReference type="EC" id="3.2.2.23" evidence="2"/>
<dbReference type="EC" id="4.2.99.18" evidence="2"/>
<dbReference type="EMBL" id="CP000577">
    <property type="protein sequence ID" value="ABN75128.1"/>
    <property type="molecule type" value="Genomic_DNA"/>
</dbReference>
<dbReference type="RefSeq" id="WP_011840109.1">
    <property type="nucleotide sequence ID" value="NC_009049.1"/>
</dbReference>
<dbReference type="SMR" id="A3PFL2"/>
<dbReference type="KEGG" id="rsh:Rsph17029_0008"/>
<dbReference type="HOGENOM" id="CLU_038423_1_1_5"/>
<dbReference type="GO" id="GO:0034039">
    <property type="term" value="F:8-oxo-7,8-dihydroguanine DNA N-glycosylase activity"/>
    <property type="evidence" value="ECO:0007669"/>
    <property type="project" value="TreeGrafter"/>
</dbReference>
<dbReference type="GO" id="GO:0140078">
    <property type="term" value="F:class I DNA-(apurinic or apyrimidinic site) endonuclease activity"/>
    <property type="evidence" value="ECO:0007669"/>
    <property type="project" value="UniProtKB-EC"/>
</dbReference>
<dbReference type="GO" id="GO:0003684">
    <property type="term" value="F:damaged DNA binding"/>
    <property type="evidence" value="ECO:0007669"/>
    <property type="project" value="InterPro"/>
</dbReference>
<dbReference type="GO" id="GO:0008270">
    <property type="term" value="F:zinc ion binding"/>
    <property type="evidence" value="ECO:0007669"/>
    <property type="project" value="UniProtKB-UniRule"/>
</dbReference>
<dbReference type="GO" id="GO:0006284">
    <property type="term" value="P:base-excision repair"/>
    <property type="evidence" value="ECO:0007669"/>
    <property type="project" value="InterPro"/>
</dbReference>
<dbReference type="CDD" id="cd08966">
    <property type="entry name" value="EcFpg-like_N"/>
    <property type="match status" value="1"/>
</dbReference>
<dbReference type="FunFam" id="1.10.8.50:FF:000003">
    <property type="entry name" value="Formamidopyrimidine-DNA glycosylase"/>
    <property type="match status" value="1"/>
</dbReference>
<dbReference type="Gene3D" id="1.10.8.50">
    <property type="match status" value="1"/>
</dbReference>
<dbReference type="Gene3D" id="3.20.190.10">
    <property type="entry name" value="MutM-like, N-terminal"/>
    <property type="match status" value="1"/>
</dbReference>
<dbReference type="HAMAP" id="MF_00103">
    <property type="entry name" value="Fapy_DNA_glycosyl"/>
    <property type="match status" value="1"/>
</dbReference>
<dbReference type="InterPro" id="IPR015886">
    <property type="entry name" value="DNA_glyclase/AP_lyase_DNA-bd"/>
</dbReference>
<dbReference type="InterPro" id="IPR020629">
    <property type="entry name" value="Formamido-pyr_DNA_Glyclase"/>
</dbReference>
<dbReference type="InterPro" id="IPR012319">
    <property type="entry name" value="FPG_cat"/>
</dbReference>
<dbReference type="InterPro" id="IPR035937">
    <property type="entry name" value="MutM-like_N-ter"/>
</dbReference>
<dbReference type="InterPro" id="IPR010979">
    <property type="entry name" value="Ribosomal_uS13-like_H2TH"/>
</dbReference>
<dbReference type="InterPro" id="IPR000214">
    <property type="entry name" value="Znf_DNA_glyclase/AP_lyase"/>
</dbReference>
<dbReference type="NCBIfam" id="TIGR00577">
    <property type="entry name" value="fpg"/>
    <property type="match status" value="1"/>
</dbReference>
<dbReference type="NCBIfam" id="NF002211">
    <property type="entry name" value="PRK01103.1"/>
    <property type="match status" value="1"/>
</dbReference>
<dbReference type="PANTHER" id="PTHR22993">
    <property type="entry name" value="FORMAMIDOPYRIMIDINE-DNA GLYCOSYLASE"/>
    <property type="match status" value="1"/>
</dbReference>
<dbReference type="PANTHER" id="PTHR22993:SF9">
    <property type="entry name" value="FORMAMIDOPYRIMIDINE-DNA GLYCOSYLASE"/>
    <property type="match status" value="1"/>
</dbReference>
<dbReference type="Pfam" id="PF01149">
    <property type="entry name" value="Fapy_DNA_glyco"/>
    <property type="match status" value="1"/>
</dbReference>
<dbReference type="Pfam" id="PF06831">
    <property type="entry name" value="H2TH"/>
    <property type="match status" value="1"/>
</dbReference>
<dbReference type="SMART" id="SM00898">
    <property type="entry name" value="Fapy_DNA_glyco"/>
    <property type="match status" value="1"/>
</dbReference>
<dbReference type="SMART" id="SM01232">
    <property type="entry name" value="H2TH"/>
    <property type="match status" value="1"/>
</dbReference>
<dbReference type="SUPFAM" id="SSF57716">
    <property type="entry name" value="Glucocorticoid receptor-like (DNA-binding domain)"/>
    <property type="match status" value="1"/>
</dbReference>
<dbReference type="SUPFAM" id="SSF81624">
    <property type="entry name" value="N-terminal domain of MutM-like DNA repair proteins"/>
    <property type="match status" value="1"/>
</dbReference>
<dbReference type="SUPFAM" id="SSF46946">
    <property type="entry name" value="S13-like H2TH domain"/>
    <property type="match status" value="1"/>
</dbReference>
<dbReference type="PROSITE" id="PS51068">
    <property type="entry name" value="FPG_CAT"/>
    <property type="match status" value="1"/>
</dbReference>
<dbReference type="PROSITE" id="PS51066">
    <property type="entry name" value="ZF_FPG_2"/>
    <property type="match status" value="1"/>
</dbReference>
<organism>
    <name type="scientific">Cereibacter sphaeroides (strain ATCC 17029 / ATH 2.4.9)</name>
    <name type="common">Rhodobacter sphaeroides</name>
    <dbReference type="NCBI Taxonomy" id="349101"/>
    <lineage>
        <taxon>Bacteria</taxon>
        <taxon>Pseudomonadati</taxon>
        <taxon>Pseudomonadota</taxon>
        <taxon>Alphaproteobacteria</taxon>
        <taxon>Rhodobacterales</taxon>
        <taxon>Paracoccaceae</taxon>
        <taxon>Cereibacter</taxon>
    </lineage>
</organism>
<evidence type="ECO:0000250" key="1"/>
<evidence type="ECO:0000255" key="2">
    <source>
        <dbReference type="HAMAP-Rule" id="MF_00103"/>
    </source>
</evidence>
<name>FPG_CERS1</name>
<sequence>MPELPEVETVRRGLEPAMAGRLIAEARVNRADLRWPFPPRMAERLTGQRVLRLRRRSKYILADLSGGQSLLIHLGMSGRMLVSGAQLGEFFHGHPAPSRHDHVVLEMEGGARITFNDARRFGAMDLVATEAAEAHPLLAVLGPEPLGNAFDGAYLAARLEGRRTPIKAALLDQRIVAGLGNIYVCEVLFRAGLAPGRLAGSLSRAEAEGLVPLIREVLLEAIEAGGSSLRDYRQADGELGYFQHTFRVYGREGLPCVTPGCSGTVGRIVQSGRSSFHCPLCQR</sequence>
<reference key="1">
    <citation type="submission" date="2007-02" db="EMBL/GenBank/DDBJ databases">
        <title>Complete sequence of chromosome 1 of Rhodobacter sphaeroides ATCC 17029.</title>
        <authorList>
            <person name="Copeland A."/>
            <person name="Lucas S."/>
            <person name="Lapidus A."/>
            <person name="Barry K."/>
            <person name="Detter J.C."/>
            <person name="Glavina del Rio T."/>
            <person name="Hammon N."/>
            <person name="Israni S."/>
            <person name="Dalin E."/>
            <person name="Tice H."/>
            <person name="Pitluck S."/>
            <person name="Kiss H."/>
            <person name="Brettin T."/>
            <person name="Bruce D."/>
            <person name="Han C."/>
            <person name="Tapia R."/>
            <person name="Gilna P."/>
            <person name="Schmutz J."/>
            <person name="Larimer F."/>
            <person name="Land M."/>
            <person name="Hauser L."/>
            <person name="Kyrpides N."/>
            <person name="Mikhailova N."/>
            <person name="Richardson P."/>
            <person name="Mackenzie C."/>
            <person name="Choudhary M."/>
            <person name="Donohue T.J."/>
            <person name="Kaplan S."/>
        </authorList>
    </citation>
    <scope>NUCLEOTIDE SEQUENCE [LARGE SCALE GENOMIC DNA]</scope>
    <source>
        <strain>ATCC 17029 / ATH 2.4.9</strain>
    </source>
</reference>
<comment type="function">
    <text evidence="2">Involved in base excision repair of DNA damaged by oxidation or by mutagenic agents. Acts as a DNA glycosylase that recognizes and removes damaged bases. Has a preference for oxidized purines, such as 7,8-dihydro-8-oxoguanine (8-oxoG). Has AP (apurinic/apyrimidinic) lyase activity and introduces nicks in the DNA strand. Cleaves the DNA backbone by beta-delta elimination to generate a single-strand break at the site of the removed base with both 3'- and 5'-phosphates.</text>
</comment>
<comment type="catalytic activity">
    <reaction evidence="2">
        <text>Hydrolysis of DNA containing ring-opened 7-methylguanine residues, releasing 2,6-diamino-4-hydroxy-5-(N-methyl)formamidopyrimidine.</text>
        <dbReference type="EC" id="3.2.2.23"/>
    </reaction>
</comment>
<comment type="catalytic activity">
    <reaction evidence="2">
        <text>2'-deoxyribonucleotide-(2'-deoxyribose 5'-phosphate)-2'-deoxyribonucleotide-DNA = a 3'-end 2'-deoxyribonucleotide-(2,3-dehydro-2,3-deoxyribose 5'-phosphate)-DNA + a 5'-end 5'-phospho-2'-deoxyribonucleoside-DNA + H(+)</text>
        <dbReference type="Rhea" id="RHEA:66592"/>
        <dbReference type="Rhea" id="RHEA-COMP:13180"/>
        <dbReference type="Rhea" id="RHEA-COMP:16897"/>
        <dbReference type="Rhea" id="RHEA-COMP:17067"/>
        <dbReference type="ChEBI" id="CHEBI:15378"/>
        <dbReference type="ChEBI" id="CHEBI:136412"/>
        <dbReference type="ChEBI" id="CHEBI:157695"/>
        <dbReference type="ChEBI" id="CHEBI:167181"/>
        <dbReference type="EC" id="4.2.99.18"/>
    </reaction>
</comment>
<comment type="cofactor">
    <cofactor evidence="2">
        <name>Zn(2+)</name>
        <dbReference type="ChEBI" id="CHEBI:29105"/>
    </cofactor>
    <text evidence="2">Binds 1 zinc ion per subunit.</text>
</comment>
<comment type="subunit">
    <text evidence="2">Monomer.</text>
</comment>
<comment type="similarity">
    <text evidence="2">Belongs to the FPG family.</text>
</comment>
<feature type="initiator methionine" description="Removed" evidence="1">
    <location>
        <position position="1"/>
    </location>
</feature>
<feature type="chain" id="PRO_1000008758" description="Formamidopyrimidine-DNA glycosylase">
    <location>
        <begin position="2"/>
        <end position="283"/>
    </location>
</feature>
<feature type="zinc finger region" description="FPG-type" evidence="2">
    <location>
        <begin position="247"/>
        <end position="283"/>
    </location>
</feature>
<feature type="active site" description="Schiff-base intermediate with DNA" evidence="2">
    <location>
        <position position="2"/>
    </location>
</feature>
<feature type="active site" description="Proton donor" evidence="2">
    <location>
        <position position="3"/>
    </location>
</feature>
<feature type="active site" description="Proton donor; for beta-elimination activity" evidence="2">
    <location>
        <position position="58"/>
    </location>
</feature>
<feature type="active site" description="Proton donor; for delta-elimination activity" evidence="2">
    <location>
        <position position="273"/>
    </location>
</feature>
<feature type="binding site" evidence="2">
    <location>
        <position position="100"/>
    </location>
    <ligand>
        <name>DNA</name>
        <dbReference type="ChEBI" id="CHEBI:16991"/>
    </ligand>
</feature>
<feature type="binding site" evidence="2">
    <location>
        <position position="119"/>
    </location>
    <ligand>
        <name>DNA</name>
        <dbReference type="ChEBI" id="CHEBI:16991"/>
    </ligand>
</feature>
<feature type="binding site" evidence="2">
    <location>
        <position position="162"/>
    </location>
    <ligand>
        <name>DNA</name>
        <dbReference type="ChEBI" id="CHEBI:16991"/>
    </ligand>
</feature>
<accession>A3PFL2</accession>
<gene>
    <name evidence="2" type="primary">mutM</name>
    <name evidence="2" type="synonym">fpg</name>
    <name type="ordered locus">Rsph17029_0008</name>
</gene>
<proteinExistence type="inferred from homology"/>